<dbReference type="EC" id="5.4.3.8" evidence="1"/>
<dbReference type="EMBL" id="CP000961">
    <property type="protein sequence ID" value="ACA85464.1"/>
    <property type="molecule type" value="Genomic_DNA"/>
</dbReference>
<dbReference type="RefSeq" id="WP_012323810.1">
    <property type="nucleotide sequence ID" value="NC_010506.1"/>
</dbReference>
<dbReference type="SMR" id="B1KHF6"/>
<dbReference type="STRING" id="392500.Swoo_1171"/>
<dbReference type="KEGG" id="swd:Swoo_1171"/>
<dbReference type="eggNOG" id="COG0001">
    <property type="taxonomic scope" value="Bacteria"/>
</dbReference>
<dbReference type="HOGENOM" id="CLU_016922_1_5_6"/>
<dbReference type="UniPathway" id="UPA00251">
    <property type="reaction ID" value="UER00317"/>
</dbReference>
<dbReference type="Proteomes" id="UP000002168">
    <property type="component" value="Chromosome"/>
</dbReference>
<dbReference type="GO" id="GO:0005737">
    <property type="term" value="C:cytoplasm"/>
    <property type="evidence" value="ECO:0007669"/>
    <property type="project" value="UniProtKB-SubCell"/>
</dbReference>
<dbReference type="GO" id="GO:0042286">
    <property type="term" value="F:glutamate-1-semialdehyde 2,1-aminomutase activity"/>
    <property type="evidence" value="ECO:0007669"/>
    <property type="project" value="UniProtKB-UniRule"/>
</dbReference>
<dbReference type="GO" id="GO:0030170">
    <property type="term" value="F:pyridoxal phosphate binding"/>
    <property type="evidence" value="ECO:0007669"/>
    <property type="project" value="InterPro"/>
</dbReference>
<dbReference type="GO" id="GO:0008483">
    <property type="term" value="F:transaminase activity"/>
    <property type="evidence" value="ECO:0007669"/>
    <property type="project" value="InterPro"/>
</dbReference>
<dbReference type="GO" id="GO:0006782">
    <property type="term" value="P:protoporphyrinogen IX biosynthetic process"/>
    <property type="evidence" value="ECO:0007669"/>
    <property type="project" value="UniProtKB-UniRule"/>
</dbReference>
<dbReference type="CDD" id="cd00610">
    <property type="entry name" value="OAT_like"/>
    <property type="match status" value="1"/>
</dbReference>
<dbReference type="FunFam" id="3.40.640.10:FF:000021">
    <property type="entry name" value="Glutamate-1-semialdehyde 2,1-aminomutase"/>
    <property type="match status" value="1"/>
</dbReference>
<dbReference type="Gene3D" id="3.90.1150.10">
    <property type="entry name" value="Aspartate Aminotransferase, domain 1"/>
    <property type="match status" value="1"/>
</dbReference>
<dbReference type="Gene3D" id="3.40.640.10">
    <property type="entry name" value="Type I PLP-dependent aspartate aminotransferase-like (Major domain)"/>
    <property type="match status" value="1"/>
</dbReference>
<dbReference type="HAMAP" id="MF_00375">
    <property type="entry name" value="HemL_aminotrans_3"/>
    <property type="match status" value="1"/>
</dbReference>
<dbReference type="InterPro" id="IPR004639">
    <property type="entry name" value="4pyrrol_synth_GluAld_NH2Trfase"/>
</dbReference>
<dbReference type="InterPro" id="IPR005814">
    <property type="entry name" value="Aminotrans_3"/>
</dbReference>
<dbReference type="InterPro" id="IPR049704">
    <property type="entry name" value="Aminotrans_3_PPA_site"/>
</dbReference>
<dbReference type="InterPro" id="IPR015424">
    <property type="entry name" value="PyrdxlP-dep_Trfase"/>
</dbReference>
<dbReference type="InterPro" id="IPR015421">
    <property type="entry name" value="PyrdxlP-dep_Trfase_major"/>
</dbReference>
<dbReference type="InterPro" id="IPR015422">
    <property type="entry name" value="PyrdxlP-dep_Trfase_small"/>
</dbReference>
<dbReference type="NCBIfam" id="TIGR00713">
    <property type="entry name" value="hemL"/>
    <property type="match status" value="1"/>
</dbReference>
<dbReference type="NCBIfam" id="NF000818">
    <property type="entry name" value="PRK00062.1"/>
    <property type="match status" value="1"/>
</dbReference>
<dbReference type="PANTHER" id="PTHR43713">
    <property type="entry name" value="GLUTAMATE-1-SEMIALDEHYDE 2,1-AMINOMUTASE"/>
    <property type="match status" value="1"/>
</dbReference>
<dbReference type="PANTHER" id="PTHR43713:SF3">
    <property type="entry name" value="GLUTAMATE-1-SEMIALDEHYDE 2,1-AMINOMUTASE 1, CHLOROPLASTIC-RELATED"/>
    <property type="match status" value="1"/>
</dbReference>
<dbReference type="Pfam" id="PF00202">
    <property type="entry name" value="Aminotran_3"/>
    <property type="match status" value="1"/>
</dbReference>
<dbReference type="SUPFAM" id="SSF53383">
    <property type="entry name" value="PLP-dependent transferases"/>
    <property type="match status" value="1"/>
</dbReference>
<dbReference type="PROSITE" id="PS00600">
    <property type="entry name" value="AA_TRANSFER_CLASS_3"/>
    <property type="match status" value="1"/>
</dbReference>
<name>GSA_SHEWM</name>
<proteinExistence type="inferred from homology"/>
<organism>
    <name type="scientific">Shewanella woodyi (strain ATCC 51908 / MS32)</name>
    <dbReference type="NCBI Taxonomy" id="392500"/>
    <lineage>
        <taxon>Bacteria</taxon>
        <taxon>Pseudomonadati</taxon>
        <taxon>Pseudomonadota</taxon>
        <taxon>Gammaproteobacteria</taxon>
        <taxon>Alteromonadales</taxon>
        <taxon>Shewanellaceae</taxon>
        <taxon>Shewanella</taxon>
    </lineage>
</organism>
<protein>
    <recommendedName>
        <fullName evidence="1">Glutamate-1-semialdehyde 2,1-aminomutase</fullName>
        <shortName evidence="1">GSA</shortName>
        <ecNumber evidence="1">5.4.3.8</ecNumber>
    </recommendedName>
    <alternativeName>
        <fullName evidence="1">Glutamate-1-semialdehyde aminotransferase</fullName>
        <shortName evidence="1">GSA-AT</shortName>
    </alternativeName>
</protein>
<gene>
    <name evidence="1" type="primary">hemL</name>
    <name type="ordered locus">Swoo_1171</name>
</gene>
<reference key="1">
    <citation type="submission" date="2008-02" db="EMBL/GenBank/DDBJ databases">
        <title>Complete sequence of Shewanella woodyi ATCC 51908.</title>
        <authorList>
            <consortium name="US DOE Joint Genome Institute"/>
            <person name="Copeland A."/>
            <person name="Lucas S."/>
            <person name="Lapidus A."/>
            <person name="Glavina del Rio T."/>
            <person name="Dalin E."/>
            <person name="Tice H."/>
            <person name="Bruce D."/>
            <person name="Goodwin L."/>
            <person name="Pitluck S."/>
            <person name="Sims D."/>
            <person name="Brettin T."/>
            <person name="Detter J.C."/>
            <person name="Han C."/>
            <person name="Kuske C.R."/>
            <person name="Schmutz J."/>
            <person name="Larimer F."/>
            <person name="Land M."/>
            <person name="Hauser L."/>
            <person name="Kyrpides N."/>
            <person name="Lykidis A."/>
            <person name="Zhao J.-S."/>
            <person name="Richardson P."/>
        </authorList>
    </citation>
    <scope>NUCLEOTIDE SEQUENCE [LARGE SCALE GENOMIC DNA]</scope>
    <source>
        <strain>ATCC 51908 / MS32</strain>
    </source>
</reference>
<feature type="chain" id="PRO_1000121922" description="Glutamate-1-semialdehyde 2,1-aminomutase">
    <location>
        <begin position="1"/>
        <end position="428"/>
    </location>
</feature>
<feature type="modified residue" description="N6-(pyridoxal phosphate)lysine" evidence="1">
    <location>
        <position position="265"/>
    </location>
</feature>
<comment type="catalytic activity">
    <reaction evidence="1">
        <text>(S)-4-amino-5-oxopentanoate = 5-aminolevulinate</text>
        <dbReference type="Rhea" id="RHEA:14265"/>
        <dbReference type="ChEBI" id="CHEBI:57501"/>
        <dbReference type="ChEBI" id="CHEBI:356416"/>
        <dbReference type="EC" id="5.4.3.8"/>
    </reaction>
</comment>
<comment type="cofactor">
    <cofactor evidence="1">
        <name>pyridoxal 5'-phosphate</name>
        <dbReference type="ChEBI" id="CHEBI:597326"/>
    </cofactor>
</comment>
<comment type="pathway">
    <text evidence="1">Porphyrin-containing compound metabolism; protoporphyrin-IX biosynthesis; 5-aminolevulinate from L-glutamyl-tRNA(Glu): step 2/2.</text>
</comment>
<comment type="subunit">
    <text evidence="1">Homodimer.</text>
</comment>
<comment type="subcellular location">
    <subcellularLocation>
        <location evidence="1">Cytoplasm</location>
    </subcellularLocation>
</comment>
<comment type="similarity">
    <text evidence="1">Belongs to the class-III pyridoxal-phosphate-dependent aminotransferase family. HemL subfamily.</text>
</comment>
<evidence type="ECO:0000255" key="1">
    <source>
        <dbReference type="HAMAP-Rule" id="MF_00375"/>
    </source>
</evidence>
<accession>B1KHF6</accession>
<keyword id="KW-0963">Cytoplasm</keyword>
<keyword id="KW-0413">Isomerase</keyword>
<keyword id="KW-0627">Porphyrin biosynthesis</keyword>
<keyword id="KW-0663">Pyridoxal phosphate</keyword>
<keyword id="KW-1185">Reference proteome</keyword>
<sequence>MTRSDELFEQAKKTIPGGVNSPVRAFNGVGGSPRFIDKADGAYIYDADGKAYIDYVGSWGPMILGHNHPKIRQAVLEAVENGLSFGAPTELEVKMAEKVIEMVPSMEQVRMVSSGTEATMSAIRLARGFTNRDKILKFEGCYHGHADCLLVKAGSGALTLGQPSSPGIPEDFAKHTLTATYNELESVKTLFEQYPEEISCIILEPVAGNMNCIPPVEGFLEGLRAICDQYGALLIIDEVMTGFRVSKSGAQGHYGITPDLTTLGKVIGGGMPVGAFGGRKDVMQFIAPTGPVYQAGTLSGNPIAMSAGLAQMEELCAEGLYQELAAKTKRIAEGFKAAANKHGIPMSINYVGGMFGFFFTEEEKVTRFDQVTQCDAEKFPEFYHGMLDEGVYLAPSAYEAGFLSMAHGEKELEETLAAAERVFAKMAK</sequence>